<name>GH109_TANFO</name>
<gene>
    <name type="primary">nagA</name>
</gene>
<organism>
    <name type="scientific">Tannerella forsythia</name>
    <name type="common">Bacteroides forsythus</name>
    <dbReference type="NCBI Taxonomy" id="28112"/>
    <lineage>
        <taxon>Bacteria</taxon>
        <taxon>Pseudomonadati</taxon>
        <taxon>Bacteroidota</taxon>
        <taxon>Bacteroidia</taxon>
        <taxon>Bacteroidales</taxon>
        <taxon>Tannerellaceae</taxon>
        <taxon>Tannerella</taxon>
    </lineage>
</organism>
<accession>A4Q8G1</accession>
<keyword id="KW-0326">Glycosidase</keyword>
<keyword id="KW-0378">Hydrolase</keyword>
<keyword id="KW-0520">NAD</keyword>
<keyword id="KW-0732">Signal</keyword>
<reference key="1">
    <citation type="journal article" date="2007" name="Nat. Biotechnol.">
        <title>Bacterial glycosidases for the production of universal red blood cells.</title>
        <authorList>
            <person name="Liu Q.P."/>
            <person name="Sulzenbacher G."/>
            <person name="Yuan H."/>
            <person name="Bennett E.P."/>
            <person name="Pietz G."/>
            <person name="Saunders K."/>
            <person name="Spence J."/>
            <person name="Nudelman E."/>
            <person name="Levery S.B."/>
            <person name="White T."/>
            <person name="Neveu J.M."/>
            <person name="Lane W.S."/>
            <person name="Bourne Y."/>
            <person name="Olsson M.L."/>
            <person name="Henrissat B."/>
            <person name="Clausen H."/>
        </authorList>
    </citation>
    <scope>NUCLEOTIDE SEQUENCE [GENOMIC DNA]</scope>
    <scope>ENZYME ACTIVITY</scope>
    <source>
        <strain>ATCC 43037 / JCM 10827 / FDC 338 / CIP 105219</strain>
    </source>
</reference>
<feature type="signal peptide" description="Tat-type signal" evidence="2">
    <location>
        <begin position="1"/>
        <end position="30"/>
    </location>
</feature>
<feature type="chain" id="PRO_0000348548" description="Alpha-N-acetylgalactosaminidase">
    <location>
        <begin position="31"/>
        <end position="468"/>
    </location>
</feature>
<feature type="binding site" evidence="1">
    <location>
        <begin position="62"/>
        <end position="63"/>
    </location>
    <ligand>
        <name>NAD(+)</name>
        <dbReference type="ChEBI" id="CHEBI:57540"/>
    </ligand>
</feature>
<feature type="binding site" evidence="1">
    <location>
        <position position="84"/>
    </location>
    <ligand>
        <name>NAD(+)</name>
        <dbReference type="ChEBI" id="CHEBI:57540"/>
    </ligand>
</feature>
<feature type="binding site" evidence="1">
    <location>
        <begin position="133"/>
        <end position="136"/>
    </location>
    <ligand>
        <name>NAD(+)</name>
        <dbReference type="ChEBI" id="CHEBI:57540"/>
    </ligand>
</feature>
<feature type="binding site" evidence="1">
    <location>
        <begin position="154"/>
        <end position="155"/>
    </location>
    <ligand>
        <name>NAD(+)</name>
        <dbReference type="ChEBI" id="CHEBI:57540"/>
    </ligand>
</feature>
<feature type="binding site" evidence="1">
    <location>
        <position position="183"/>
    </location>
    <ligand>
        <name>NAD(+)</name>
        <dbReference type="ChEBI" id="CHEBI:57540"/>
    </ligand>
</feature>
<feature type="binding site" evidence="1">
    <location>
        <position position="212"/>
    </location>
    <ligand>
        <name>substrate</name>
    </ligand>
</feature>
<feature type="binding site" evidence="1">
    <location>
        <begin position="243"/>
        <end position="247"/>
    </location>
    <ligand>
        <name>NAD(+)</name>
        <dbReference type="ChEBI" id="CHEBI:57540"/>
    </ligand>
</feature>
<feature type="binding site" evidence="1">
    <location>
        <position position="248"/>
    </location>
    <ligand>
        <name>substrate</name>
    </ligand>
</feature>
<feature type="binding site" evidence="1">
    <location>
        <begin position="260"/>
        <end position="263"/>
    </location>
    <ligand>
        <name>substrate</name>
    </ligand>
</feature>
<feature type="binding site" evidence="1">
    <location>
        <position position="260"/>
    </location>
    <ligand>
        <name>NAD(+)</name>
        <dbReference type="ChEBI" id="CHEBI:57540"/>
    </ligand>
</feature>
<feature type="binding site" evidence="1">
    <location>
        <position position="342"/>
    </location>
    <ligand>
        <name>substrate</name>
    </ligand>
</feature>
<dbReference type="EC" id="3.2.1.49"/>
<dbReference type="EMBL" id="AM039448">
    <property type="protein sequence ID" value="CAJ01380.1"/>
    <property type="molecule type" value="Genomic_DNA"/>
</dbReference>
<dbReference type="RefSeq" id="WP_046825560.1">
    <property type="nucleotide sequence ID" value="NZ_CAJPTF010000010.1"/>
</dbReference>
<dbReference type="SMR" id="A4Q8G1"/>
<dbReference type="CAZy" id="GH109">
    <property type="family name" value="Glycoside Hydrolase Family 109"/>
</dbReference>
<dbReference type="GO" id="GO:0008456">
    <property type="term" value="F:alpha-N-acetylgalactosaminidase activity"/>
    <property type="evidence" value="ECO:0007669"/>
    <property type="project" value="UniProtKB-EC"/>
</dbReference>
<dbReference type="GO" id="GO:0000166">
    <property type="term" value="F:nucleotide binding"/>
    <property type="evidence" value="ECO:0007669"/>
    <property type="project" value="InterPro"/>
</dbReference>
<dbReference type="Gene3D" id="3.30.360.10">
    <property type="entry name" value="Dihydrodipicolinate Reductase, domain 2"/>
    <property type="match status" value="1"/>
</dbReference>
<dbReference type="Gene3D" id="3.40.50.720">
    <property type="entry name" value="NAD(P)-binding Rossmann-like Domain"/>
    <property type="match status" value="1"/>
</dbReference>
<dbReference type="InterPro" id="IPR000683">
    <property type="entry name" value="Gfo/Idh/MocA-like_OxRdtase_N"/>
</dbReference>
<dbReference type="InterPro" id="IPR050463">
    <property type="entry name" value="Gfo/Idh/MocA_oxidrdct_glycsds"/>
</dbReference>
<dbReference type="InterPro" id="IPR049303">
    <property type="entry name" value="Glyco_hydro_109_C"/>
</dbReference>
<dbReference type="InterPro" id="IPR036291">
    <property type="entry name" value="NAD(P)-bd_dom_sf"/>
</dbReference>
<dbReference type="InterPro" id="IPR006311">
    <property type="entry name" value="TAT_signal"/>
</dbReference>
<dbReference type="InterPro" id="IPR019546">
    <property type="entry name" value="TAT_signal_bac_arc"/>
</dbReference>
<dbReference type="NCBIfam" id="TIGR01409">
    <property type="entry name" value="TAT_signal_seq"/>
    <property type="match status" value="1"/>
</dbReference>
<dbReference type="PANTHER" id="PTHR43818">
    <property type="entry name" value="BCDNA.GH03377"/>
    <property type="match status" value="1"/>
</dbReference>
<dbReference type="PANTHER" id="PTHR43818:SF1">
    <property type="entry name" value="GLYCOSYL HYDROLASE FAMILY 109 PROTEIN"/>
    <property type="match status" value="1"/>
</dbReference>
<dbReference type="Pfam" id="PF01408">
    <property type="entry name" value="GFO_IDH_MocA"/>
    <property type="match status" value="1"/>
</dbReference>
<dbReference type="Pfam" id="PF21252">
    <property type="entry name" value="Glyco_hydro_109_C"/>
    <property type="match status" value="1"/>
</dbReference>
<dbReference type="SUPFAM" id="SSF55347">
    <property type="entry name" value="Glyceraldehyde-3-phosphate dehydrogenase-like, C-terminal domain"/>
    <property type="match status" value="1"/>
</dbReference>
<dbReference type="SUPFAM" id="SSF51735">
    <property type="entry name" value="NAD(P)-binding Rossmann-fold domains"/>
    <property type="match status" value="1"/>
</dbReference>
<dbReference type="PROSITE" id="PS51318">
    <property type="entry name" value="TAT"/>
    <property type="match status" value="1"/>
</dbReference>
<proteinExistence type="inferred from homology"/>
<protein>
    <recommendedName>
        <fullName>Alpha-N-acetylgalactosaminidase</fullName>
        <ecNumber>3.2.1.49</ecNumber>
    </recommendedName>
    <alternativeName>
        <fullName>Glycosyl hydrolase family 109 protein</fullName>
    </alternativeName>
</protein>
<sequence>MENTRRNFLKKVTAAGIGAAGLAVTDQAMAAVNQPGEAAQQKKKPAGKSDGMLRFGFIGTGSRCQEHINNVLGIQGNKIVAICDIQKGPLEKTLKHIAKFNVPEPKVYTGGEREFEKMLNNEEFDCVIIASPWEWHVPMAVAAMKAGVPYVGVEVSAANTVEECWDLVNVSEATGSHLNILENVCYRRDVMAALRMVREGLFGEMIHGTCGYQHDLRDVKFNDGIHYTYQEGGELRMGPTAYAEAQWRTQHSVTRNGDIYPTHGIGPVANCLNINRGNRFLSLTSMATQSRGLHNFVVDKGGANHPYAKIHFNLGDIVTSMIKCANGQTVIVTHDTNLPRPYSLGFRIQGTRGLWMNDGNHVYVEGQSKPHRWDASDDWFKKYDHKLWSTLELKAKEAGHGGMDYIMMYDFIDAIRNKKPTPMDCYDAAAWSAISGLSEMSIARGGAVVDFPDFTRGQWIHRQPAFAL</sequence>
<comment type="function">
    <text>Glycosidase that has specific alpha-N-acetylgalactosaminidase activity.</text>
</comment>
<comment type="catalytic activity">
    <reaction evidence="3">
        <text>Cleavage of non-reducing alpha-(1-&gt;3)-N-acetylgalactosamine residues from human blood group A and AB mucin glycoproteins, Forssman hapten and blood group A lacto series glycolipids.</text>
        <dbReference type="EC" id="3.2.1.49"/>
    </reaction>
</comment>
<comment type="cofactor">
    <cofactor evidence="1">
        <name>NAD(+)</name>
        <dbReference type="ChEBI" id="CHEBI:57540"/>
    </cofactor>
    <text evidence="1">Binds 1 NAD(+) per subunit. The NAD(+) cannot dissociate.</text>
</comment>
<comment type="PTM">
    <text>Predicted to be exported by the Tat system. The position of the signal peptide cleavage has not been experimentally proven.</text>
</comment>
<comment type="similarity">
    <text evidence="4">Belongs to the Gfo/Idh/MocA family. Glycosyl hydrolase 109 subfamily.</text>
</comment>
<evidence type="ECO:0000250" key="1"/>
<evidence type="ECO:0000255" key="2">
    <source>
        <dbReference type="PROSITE-ProRule" id="PRU00648"/>
    </source>
</evidence>
<evidence type="ECO:0000269" key="3">
    <source>
    </source>
</evidence>
<evidence type="ECO:0000305" key="4"/>